<keyword id="KW-0168">Coated pit</keyword>
<keyword id="KW-0968">Cytoplasmic vesicle</keyword>
<keyword id="KW-0254">Endocytosis</keyword>
<keyword id="KW-0472">Membrane</keyword>
<keyword id="KW-0539">Nucleus</keyword>
<keyword id="KW-1185">Reference proteome</keyword>
<keyword id="KW-0677">Repeat</keyword>
<keyword id="KW-0728">SH3 domain</keyword>
<proteinExistence type="evidence at transcript level"/>
<comment type="function">
    <text evidence="1">Possible role in regulating endocytosis of the transferrin receptor at the plasma membrane. Alternatively, may function as a negative regulator of the amino acid-induced TOR signaling by inhibiting the formation of active Rag GTPase complexes. Preferentially binds inactive Rag GTPase complexes and prevents their interaction with the mTORC1 complex inhibiting its relocalization to lysosomes and its activation. Thereby, may indirectly regulate cell growth, proliferation and autophagy (By similarity).</text>
</comment>
<comment type="subunit">
    <text evidence="1">Homodimer or homooligomer.</text>
</comment>
<comment type="subcellular location">
    <subcellularLocation>
        <location evidence="1">Membrane</location>
        <location evidence="1">Clathrin-coated pit</location>
    </subcellularLocation>
    <subcellularLocation>
        <location evidence="1">Cytoplasmic vesicle</location>
        <location evidence="1">Clathrin-coated vesicle</location>
    </subcellularLocation>
    <subcellularLocation>
        <location evidence="1">Nucleus</location>
    </subcellularLocation>
    <text evidence="1">Specifically associated with transferrin receptor-containing clathrin-coated pits and clathrin-coated vesicles. May also localize to the nucleus (By similarity).</text>
</comment>
<comment type="domain">
    <text evidence="1">The SH3 domain mediates localization to the clathrin-coated pits and vesicles.</text>
</comment>
<sequence>MAAQKIRSANINGLPRCKSEGTLIDFSGVPDPSLSEVKVLSPSSLRIDNPASLENVKEVVAIKDYCPNNFTTLKFSKGEHLYVLDASGGDWWYAHNSTEMGYIPSSYVQPLNYRDSCLSDSGMIDGLLENVDEGVKELDLLGDWTDSFNQDSVKKSHNNPFLRPSVSNPFLNGPLVSQTHAADTENSVDLLLFDPLAPSHVIASETSTDMLVNLLPNTTPNKVAVAVKRDNSFFRSKRSYSLSELSVLQAKSEGPTTGSFFAGLKSPAPEQFQSREDFRTAWLNHRKLARSCHDLDLLGQNPGWGQTQPVETSIVCRLDSSGGAVQLPDTNISIHVPEKHVASGETQQISLKALLDPPLELNNDKCTTVSPVLEIKLSNMDVHCPLTLELRISVALGGNASALNMVGIKCLRSDAREGPYNPVTQIYMYGDTVQVKLDNLEPVMYVVMVAQGQGIVSPSSVWEYINKKVTVGLYGPKHIHPSFKAVLAIFGHDCAPKSLLVNEVGQQANNPAPVTLQLWGKQQFVLPKPQDVQLCLFSNMTNYRVDAGDQGKIVRGFQLKLGKVSRLIFPIICQDPDQLSDFTLRVQVRDEFGGVLSQYCVQTPRPLPKTGTKSTGPRRFLKKKELGKIVLSPLAITCKYPTFQDRPVTSLKYGKLLKTVVRQSKNPYLLEYKKGDVIGLLSEEKIRLKGQLWNKEWYIGYYQGKLGLVHAKNVLVVGKVKPSFFSGPELTTGLLLEQILRPCKFLTYIYASVRTLLMENIGSWRCFADALGYGNLPLSYFCRVELESETERVASVLEKLKEECNSEGKEKKSFQKELIMALLKIDCQGLVVRLIQDFVLLTTAVEVAARWRELSEKLARVSKQQMDGYEAPHRDRNGMLDSEAMWKPAYDFLLTWSAQIGESYRDVIQELHTGLDKMRSPITKRWKHLTGTLILVNSLDILRATAFSTEAPEDCII</sequence>
<evidence type="ECO:0000250" key="1"/>
<evidence type="ECO:0000255" key="2">
    <source>
        <dbReference type="PROSITE-ProRule" id="PRU00192"/>
    </source>
</evidence>
<evidence type="ECO:0000255" key="3">
    <source>
        <dbReference type="PROSITE-ProRule" id="PRU00485"/>
    </source>
</evidence>
<gene>
    <name type="primary">sh3bp4-a</name>
</gene>
<dbReference type="EMBL" id="BC068780">
    <property type="protein sequence ID" value="AAH68780.1"/>
    <property type="molecule type" value="mRNA"/>
</dbReference>
<dbReference type="RefSeq" id="NP_001084672.1">
    <property type="nucleotide sequence ID" value="NM_001091203.1"/>
</dbReference>
<dbReference type="SMR" id="Q6NU22"/>
<dbReference type="DNASU" id="414632"/>
<dbReference type="GeneID" id="414632"/>
<dbReference type="KEGG" id="xla:414632"/>
<dbReference type="AGR" id="Xenbase:XB-GENE-6252292"/>
<dbReference type="CTD" id="414632"/>
<dbReference type="Xenbase" id="XB-GENE-6252292">
    <property type="gene designation" value="sh3bp4.S"/>
</dbReference>
<dbReference type="OMA" id="KHQFILA"/>
<dbReference type="OrthoDB" id="10000126at2759"/>
<dbReference type="Proteomes" id="UP000186698">
    <property type="component" value="Chromosome 9_10S"/>
</dbReference>
<dbReference type="Bgee" id="414632">
    <property type="expression patterns" value="Expressed in gastrula and 19 other cell types or tissues"/>
</dbReference>
<dbReference type="GO" id="GO:0005905">
    <property type="term" value="C:clathrin-coated pit"/>
    <property type="evidence" value="ECO:0007669"/>
    <property type="project" value="UniProtKB-SubCell"/>
</dbReference>
<dbReference type="GO" id="GO:0030136">
    <property type="term" value="C:clathrin-coated vesicle"/>
    <property type="evidence" value="ECO:0007669"/>
    <property type="project" value="UniProtKB-SubCell"/>
</dbReference>
<dbReference type="GO" id="GO:0005737">
    <property type="term" value="C:cytoplasm"/>
    <property type="evidence" value="ECO:0000250"/>
    <property type="project" value="UniProtKB"/>
</dbReference>
<dbReference type="GO" id="GO:0005634">
    <property type="term" value="C:nucleus"/>
    <property type="evidence" value="ECO:0007669"/>
    <property type="project" value="UniProtKB-SubCell"/>
</dbReference>
<dbReference type="GO" id="GO:0005092">
    <property type="term" value="F:GDP-dissociation inhibitor activity"/>
    <property type="evidence" value="ECO:0000250"/>
    <property type="project" value="UniProtKB"/>
</dbReference>
<dbReference type="GO" id="GO:0071230">
    <property type="term" value="P:cellular response to amino acid stimulus"/>
    <property type="evidence" value="ECO:0000250"/>
    <property type="project" value="UniProtKB"/>
</dbReference>
<dbReference type="GO" id="GO:0006897">
    <property type="term" value="P:endocytosis"/>
    <property type="evidence" value="ECO:0007669"/>
    <property type="project" value="UniProtKB-KW"/>
</dbReference>
<dbReference type="GO" id="GO:0030308">
    <property type="term" value="P:negative regulation of cell growth"/>
    <property type="evidence" value="ECO:0000250"/>
    <property type="project" value="UniProtKB"/>
</dbReference>
<dbReference type="GO" id="GO:0008285">
    <property type="term" value="P:negative regulation of cell population proliferation"/>
    <property type="evidence" value="ECO:0000250"/>
    <property type="project" value="UniProtKB"/>
</dbReference>
<dbReference type="GO" id="GO:0034260">
    <property type="term" value="P:negative regulation of GTPase activity"/>
    <property type="evidence" value="ECO:0000250"/>
    <property type="project" value="UniProtKB"/>
</dbReference>
<dbReference type="GO" id="GO:0032007">
    <property type="term" value="P:negative regulation of TOR signaling"/>
    <property type="evidence" value="ECO:0000250"/>
    <property type="project" value="UniProtKB"/>
</dbReference>
<dbReference type="GO" id="GO:0010508">
    <property type="term" value="P:positive regulation of autophagy"/>
    <property type="evidence" value="ECO:0000250"/>
    <property type="project" value="UniProtKB"/>
</dbReference>
<dbReference type="GO" id="GO:0061462">
    <property type="term" value="P:protein localization to lysosome"/>
    <property type="evidence" value="ECO:0000250"/>
    <property type="project" value="UniProtKB"/>
</dbReference>
<dbReference type="GO" id="GO:0050790">
    <property type="term" value="P:regulation of catalytic activity"/>
    <property type="evidence" value="ECO:0000250"/>
    <property type="project" value="UniProtKB"/>
</dbReference>
<dbReference type="FunFam" id="2.60.220.30:FF:000008">
    <property type="entry name" value="SH3 domain-binding protein 4"/>
    <property type="match status" value="1"/>
</dbReference>
<dbReference type="Gene3D" id="2.60.220.30">
    <property type="match status" value="1"/>
</dbReference>
<dbReference type="Gene3D" id="2.30.30.40">
    <property type="entry name" value="SH3 Domains"/>
    <property type="match status" value="1"/>
</dbReference>
<dbReference type="InterPro" id="IPR056183">
    <property type="entry name" value="DEATH_SH3BP4"/>
</dbReference>
<dbReference type="InterPro" id="IPR036028">
    <property type="entry name" value="SH3-like_dom_sf"/>
</dbReference>
<dbReference type="InterPro" id="IPR001452">
    <property type="entry name" value="SH3_domain"/>
</dbReference>
<dbReference type="InterPro" id="IPR056181">
    <property type="entry name" value="SH3BP4_C"/>
</dbReference>
<dbReference type="InterPro" id="IPR056182">
    <property type="entry name" value="UPA_SH3BP4"/>
</dbReference>
<dbReference type="InterPro" id="IPR000906">
    <property type="entry name" value="ZU5_dom"/>
</dbReference>
<dbReference type="PANTHER" id="PTHR15603:SF3">
    <property type="entry name" value="SH3 DOMAIN-BINDING PROTEIN 4"/>
    <property type="match status" value="1"/>
</dbReference>
<dbReference type="PANTHER" id="PTHR15603">
    <property type="entry name" value="SH3 DOMAIN-CONTAINING PROTEIN"/>
    <property type="match status" value="1"/>
</dbReference>
<dbReference type="Pfam" id="PF24094">
    <property type="entry name" value="DEATH_SH3BP4"/>
    <property type="match status" value="1"/>
</dbReference>
<dbReference type="Pfam" id="PF00018">
    <property type="entry name" value="SH3_1"/>
    <property type="match status" value="1"/>
</dbReference>
<dbReference type="Pfam" id="PF07653">
    <property type="entry name" value="SH3_2"/>
    <property type="match status" value="1"/>
</dbReference>
<dbReference type="Pfam" id="PF23637">
    <property type="entry name" value="SH3BP4_C"/>
    <property type="match status" value="1"/>
</dbReference>
<dbReference type="Pfam" id="PF23640">
    <property type="entry name" value="UPA_SH3BP4"/>
    <property type="match status" value="1"/>
</dbReference>
<dbReference type="Pfam" id="PF00791">
    <property type="entry name" value="ZU5"/>
    <property type="match status" value="1"/>
</dbReference>
<dbReference type="SMART" id="SM00326">
    <property type="entry name" value="SH3"/>
    <property type="match status" value="2"/>
</dbReference>
<dbReference type="SUPFAM" id="SSF50044">
    <property type="entry name" value="SH3-domain"/>
    <property type="match status" value="1"/>
</dbReference>
<dbReference type="PROSITE" id="PS50002">
    <property type="entry name" value="SH3"/>
    <property type="match status" value="2"/>
</dbReference>
<dbReference type="PROSITE" id="PS51145">
    <property type="entry name" value="ZU5"/>
    <property type="match status" value="1"/>
</dbReference>
<organism>
    <name type="scientific">Xenopus laevis</name>
    <name type="common">African clawed frog</name>
    <dbReference type="NCBI Taxonomy" id="8355"/>
    <lineage>
        <taxon>Eukaryota</taxon>
        <taxon>Metazoa</taxon>
        <taxon>Chordata</taxon>
        <taxon>Craniata</taxon>
        <taxon>Vertebrata</taxon>
        <taxon>Euteleostomi</taxon>
        <taxon>Amphibia</taxon>
        <taxon>Batrachia</taxon>
        <taxon>Anura</taxon>
        <taxon>Pipoidea</taxon>
        <taxon>Pipidae</taxon>
        <taxon>Xenopodinae</taxon>
        <taxon>Xenopus</taxon>
        <taxon>Xenopus</taxon>
    </lineage>
</organism>
<name>SH34A_XENLA</name>
<protein>
    <recommendedName>
        <fullName>SH3 domain-binding protein 4-A</fullName>
    </recommendedName>
</protein>
<accession>Q6NU22</accession>
<reference key="1">
    <citation type="submission" date="2004-04" db="EMBL/GenBank/DDBJ databases">
        <authorList>
            <consortium name="NIH - Xenopus Gene Collection (XGC) project"/>
        </authorList>
    </citation>
    <scope>NUCLEOTIDE SEQUENCE [LARGE SCALE MRNA]</scope>
    <source>
        <tissue>Embryo</tissue>
    </source>
</reference>
<feature type="chain" id="PRO_0000274579" description="SH3 domain-binding protein 4-A">
    <location>
        <begin position="1"/>
        <end position="957"/>
    </location>
</feature>
<feature type="domain" description="SH3 1" evidence="2">
    <location>
        <begin position="54"/>
        <end position="113"/>
    </location>
</feature>
<feature type="domain" description="ZU5" evidence="3">
    <location>
        <begin position="312"/>
        <end position="449"/>
    </location>
</feature>
<feature type="domain" description="SH3 2" evidence="2">
    <location>
        <begin position="649"/>
        <end position="719"/>
    </location>
</feature>